<keyword id="KW-0028">Amino-acid biosynthesis</keyword>
<keyword id="KW-0963">Cytoplasm</keyword>
<keyword id="KW-0315">Glutamine amidotransferase</keyword>
<keyword id="KW-0368">Histidine biosynthesis</keyword>
<keyword id="KW-0378">Hydrolase</keyword>
<keyword id="KW-0456">Lyase</keyword>
<accession>P61781</accession>
<name>HIS5_THET2</name>
<gene>
    <name evidence="1" type="primary">hisH</name>
    <name type="ordered locus">TT_C0062</name>
</gene>
<feature type="chain" id="PRO_0000152438" description="Imidazole glycerol phosphate synthase subunit HisH">
    <location>
        <begin position="1"/>
        <end position="198"/>
    </location>
</feature>
<feature type="domain" description="Glutamine amidotransferase type-1" evidence="1">
    <location>
        <begin position="2"/>
        <end position="198"/>
    </location>
</feature>
<feature type="active site" description="Nucleophile" evidence="1">
    <location>
        <position position="80"/>
    </location>
</feature>
<feature type="active site" evidence="1">
    <location>
        <position position="176"/>
    </location>
</feature>
<feature type="active site" evidence="1">
    <location>
        <position position="178"/>
    </location>
</feature>
<comment type="function">
    <text evidence="1">IGPS catalyzes the conversion of PRFAR and glutamine to IGP, AICAR and glutamate. The HisH subunit catalyzes the hydrolysis of glutamine to glutamate and ammonia as part of the synthesis of IGP and AICAR. The resulting ammonia molecule is channeled to the active site of HisF.</text>
</comment>
<comment type="catalytic activity">
    <reaction evidence="1">
        <text>5-[(5-phospho-1-deoxy-D-ribulos-1-ylimino)methylamino]-1-(5-phospho-beta-D-ribosyl)imidazole-4-carboxamide + L-glutamine = D-erythro-1-(imidazol-4-yl)glycerol 3-phosphate + 5-amino-1-(5-phospho-beta-D-ribosyl)imidazole-4-carboxamide + L-glutamate + H(+)</text>
        <dbReference type="Rhea" id="RHEA:24793"/>
        <dbReference type="ChEBI" id="CHEBI:15378"/>
        <dbReference type="ChEBI" id="CHEBI:29985"/>
        <dbReference type="ChEBI" id="CHEBI:58278"/>
        <dbReference type="ChEBI" id="CHEBI:58359"/>
        <dbReference type="ChEBI" id="CHEBI:58475"/>
        <dbReference type="ChEBI" id="CHEBI:58525"/>
        <dbReference type="EC" id="4.3.2.10"/>
    </reaction>
</comment>
<comment type="catalytic activity">
    <reaction evidence="1">
        <text>L-glutamine + H2O = L-glutamate + NH4(+)</text>
        <dbReference type="Rhea" id="RHEA:15889"/>
        <dbReference type="ChEBI" id="CHEBI:15377"/>
        <dbReference type="ChEBI" id="CHEBI:28938"/>
        <dbReference type="ChEBI" id="CHEBI:29985"/>
        <dbReference type="ChEBI" id="CHEBI:58359"/>
        <dbReference type="EC" id="3.5.1.2"/>
    </reaction>
</comment>
<comment type="pathway">
    <text evidence="1">Amino-acid biosynthesis; L-histidine biosynthesis; L-histidine from 5-phospho-alpha-D-ribose 1-diphosphate: step 5/9.</text>
</comment>
<comment type="subunit">
    <text evidence="1">Heterodimer of HisH and HisF.</text>
</comment>
<comment type="subcellular location">
    <subcellularLocation>
        <location evidence="1">Cytoplasm</location>
    </subcellularLocation>
</comment>
<protein>
    <recommendedName>
        <fullName evidence="1">Imidazole glycerol phosphate synthase subunit HisH</fullName>
        <ecNumber evidence="1">4.3.2.10</ecNumber>
    </recommendedName>
    <alternativeName>
        <fullName evidence="1">IGP synthase glutaminase subunit</fullName>
        <ecNumber evidence="1">3.5.1.2</ecNumber>
    </alternativeName>
    <alternativeName>
        <fullName evidence="1">IGP synthase subunit HisH</fullName>
    </alternativeName>
    <alternativeName>
        <fullName evidence="1">ImGP synthase subunit HisH</fullName>
        <shortName evidence="1">IGPS subunit HisH</shortName>
    </alternativeName>
</protein>
<evidence type="ECO:0000255" key="1">
    <source>
        <dbReference type="HAMAP-Rule" id="MF_00278"/>
    </source>
</evidence>
<dbReference type="EC" id="4.3.2.10" evidence="1"/>
<dbReference type="EC" id="3.5.1.2" evidence="1"/>
<dbReference type="EMBL" id="AE017221">
    <property type="protein sequence ID" value="AAS80410.1"/>
    <property type="molecule type" value="Genomic_DNA"/>
</dbReference>
<dbReference type="RefSeq" id="WP_011172519.1">
    <property type="nucleotide sequence ID" value="NC_005835.1"/>
</dbReference>
<dbReference type="SMR" id="P61781"/>
<dbReference type="GeneID" id="3170062"/>
<dbReference type="KEGG" id="tth:TT_C0062"/>
<dbReference type="eggNOG" id="COG0118">
    <property type="taxonomic scope" value="Bacteria"/>
</dbReference>
<dbReference type="HOGENOM" id="CLU_071837_2_2_0"/>
<dbReference type="OrthoDB" id="9807137at2"/>
<dbReference type="UniPathway" id="UPA00031">
    <property type="reaction ID" value="UER00010"/>
</dbReference>
<dbReference type="Proteomes" id="UP000000592">
    <property type="component" value="Chromosome"/>
</dbReference>
<dbReference type="GO" id="GO:0005737">
    <property type="term" value="C:cytoplasm"/>
    <property type="evidence" value="ECO:0007669"/>
    <property type="project" value="UniProtKB-SubCell"/>
</dbReference>
<dbReference type="GO" id="GO:0004359">
    <property type="term" value="F:glutaminase activity"/>
    <property type="evidence" value="ECO:0007669"/>
    <property type="project" value="UniProtKB-EC"/>
</dbReference>
<dbReference type="GO" id="GO:0000107">
    <property type="term" value="F:imidazoleglycerol-phosphate synthase activity"/>
    <property type="evidence" value="ECO:0007669"/>
    <property type="project" value="UniProtKB-UniRule"/>
</dbReference>
<dbReference type="GO" id="GO:0016829">
    <property type="term" value="F:lyase activity"/>
    <property type="evidence" value="ECO:0007669"/>
    <property type="project" value="UniProtKB-KW"/>
</dbReference>
<dbReference type="GO" id="GO:0000105">
    <property type="term" value="P:L-histidine biosynthetic process"/>
    <property type="evidence" value="ECO:0007669"/>
    <property type="project" value="UniProtKB-UniRule"/>
</dbReference>
<dbReference type="CDD" id="cd01748">
    <property type="entry name" value="GATase1_IGP_Synthase"/>
    <property type="match status" value="1"/>
</dbReference>
<dbReference type="Gene3D" id="3.40.50.880">
    <property type="match status" value="1"/>
</dbReference>
<dbReference type="HAMAP" id="MF_00278">
    <property type="entry name" value="HisH"/>
    <property type="match status" value="1"/>
</dbReference>
<dbReference type="InterPro" id="IPR029062">
    <property type="entry name" value="Class_I_gatase-like"/>
</dbReference>
<dbReference type="InterPro" id="IPR017926">
    <property type="entry name" value="GATASE"/>
</dbReference>
<dbReference type="InterPro" id="IPR010139">
    <property type="entry name" value="Imidazole-glycPsynth_HisH"/>
</dbReference>
<dbReference type="NCBIfam" id="TIGR01855">
    <property type="entry name" value="IMP_synth_hisH"/>
    <property type="match status" value="1"/>
</dbReference>
<dbReference type="PANTHER" id="PTHR42701">
    <property type="entry name" value="IMIDAZOLE GLYCEROL PHOSPHATE SYNTHASE SUBUNIT HISH"/>
    <property type="match status" value="1"/>
</dbReference>
<dbReference type="PANTHER" id="PTHR42701:SF1">
    <property type="entry name" value="IMIDAZOLE GLYCEROL PHOSPHATE SYNTHASE SUBUNIT HISH"/>
    <property type="match status" value="1"/>
</dbReference>
<dbReference type="Pfam" id="PF00117">
    <property type="entry name" value="GATase"/>
    <property type="match status" value="1"/>
</dbReference>
<dbReference type="PIRSF" id="PIRSF000495">
    <property type="entry name" value="Amidotransf_hisH"/>
    <property type="match status" value="1"/>
</dbReference>
<dbReference type="SUPFAM" id="SSF52317">
    <property type="entry name" value="Class I glutamine amidotransferase-like"/>
    <property type="match status" value="1"/>
</dbReference>
<dbReference type="PROSITE" id="PS51273">
    <property type="entry name" value="GATASE_TYPE_1"/>
    <property type="match status" value="1"/>
</dbReference>
<proteinExistence type="inferred from homology"/>
<organism>
    <name type="scientific">Thermus thermophilus (strain ATCC BAA-163 / DSM 7039 / HB27)</name>
    <dbReference type="NCBI Taxonomy" id="262724"/>
    <lineage>
        <taxon>Bacteria</taxon>
        <taxon>Thermotogati</taxon>
        <taxon>Deinococcota</taxon>
        <taxon>Deinococci</taxon>
        <taxon>Thermales</taxon>
        <taxon>Thermaceae</taxon>
        <taxon>Thermus</taxon>
    </lineage>
</organism>
<sequence length="198" mass="21532">MKALLIDYGSGNLRSAAKALEAAGFSVAVAQDPKAHEEADLLVLPGQGHFGQVMRAFQESGFVERVRRHLERGLPFLGICVGMQVLYEGSEEAPGVRGLGLVPGEVRRFRAGRVPQMGWNALEFGGAFAPLTGRHFYFANSYYGPLTPYSLGKGEYEGTPFTALLAKENLLAPQFHPEKSGKAGLAFLALARRYFEVL</sequence>
<reference key="1">
    <citation type="journal article" date="2004" name="Nat. Biotechnol.">
        <title>The genome sequence of the extreme thermophile Thermus thermophilus.</title>
        <authorList>
            <person name="Henne A."/>
            <person name="Brueggemann H."/>
            <person name="Raasch C."/>
            <person name="Wiezer A."/>
            <person name="Hartsch T."/>
            <person name="Liesegang H."/>
            <person name="Johann A."/>
            <person name="Lienard T."/>
            <person name="Gohl O."/>
            <person name="Martinez-Arias R."/>
            <person name="Jacobi C."/>
            <person name="Starkuviene V."/>
            <person name="Schlenczeck S."/>
            <person name="Dencker S."/>
            <person name="Huber R."/>
            <person name="Klenk H.-P."/>
            <person name="Kramer W."/>
            <person name="Merkl R."/>
            <person name="Gottschalk G."/>
            <person name="Fritz H.-J."/>
        </authorList>
    </citation>
    <scope>NUCLEOTIDE SEQUENCE [LARGE SCALE GENOMIC DNA]</scope>
    <source>
        <strain>ATCC BAA-163 / DSM 7039 / HB27</strain>
    </source>
</reference>